<comment type="function">
    <text evidence="1">Required for maturation of urease via the functional incorporation of the urease nickel metallocenter.</text>
</comment>
<comment type="subunit">
    <text evidence="1">UreD, UreF and UreG form a complex that acts as a GTP-hydrolysis-dependent molecular chaperone, activating the urease apoprotein by helping to assemble the nickel containing metallocenter of UreC. The UreE protein probably delivers the nickel.</text>
</comment>
<comment type="subcellular location">
    <subcellularLocation>
        <location evidence="1">Cytoplasm</location>
    </subcellularLocation>
</comment>
<comment type="similarity">
    <text evidence="1">Belongs to the UreF family.</text>
</comment>
<sequence>MTPLRQLISLLHLASPALPIGGFSYSQGLEAAIDIGCVRDADTAERWIRDSLLYVQAQCEAPLWLLLHRGWQAMDVDAVREWNGWFHATRETAELRLETEQMGWSLAKLVGQMGWGGDALREHLAVISPVCLPTAFAATCVALEIDEREGLAAYCFNWAENQVAAAIKAVPLGQVAGQHMLRRLHEAVLMTVDEAVQRAAETPPRLSTFSPMLGLLSSRHETQYSRLFRS</sequence>
<evidence type="ECO:0000255" key="1">
    <source>
        <dbReference type="HAMAP-Rule" id="MF_01385"/>
    </source>
</evidence>
<accession>Q473Q7</accession>
<gene>
    <name evidence="1" type="primary">ureF</name>
    <name type="ordered locus">Reut_A0997</name>
</gene>
<organism>
    <name type="scientific">Cupriavidus pinatubonensis (strain JMP 134 / LMG 1197)</name>
    <name type="common">Cupriavidus necator (strain JMP 134)</name>
    <dbReference type="NCBI Taxonomy" id="264198"/>
    <lineage>
        <taxon>Bacteria</taxon>
        <taxon>Pseudomonadati</taxon>
        <taxon>Pseudomonadota</taxon>
        <taxon>Betaproteobacteria</taxon>
        <taxon>Burkholderiales</taxon>
        <taxon>Burkholderiaceae</taxon>
        <taxon>Cupriavidus</taxon>
    </lineage>
</organism>
<keyword id="KW-0143">Chaperone</keyword>
<keyword id="KW-0963">Cytoplasm</keyword>
<keyword id="KW-0996">Nickel insertion</keyword>
<dbReference type="EMBL" id="CP000090">
    <property type="protein sequence ID" value="AAZ60376.1"/>
    <property type="molecule type" value="Genomic_DNA"/>
</dbReference>
<dbReference type="SMR" id="Q473Q7"/>
<dbReference type="STRING" id="264198.Reut_A0997"/>
<dbReference type="KEGG" id="reu:Reut_A0997"/>
<dbReference type="eggNOG" id="COG0830">
    <property type="taxonomic scope" value="Bacteria"/>
</dbReference>
<dbReference type="HOGENOM" id="CLU_049215_2_1_4"/>
<dbReference type="OrthoDB" id="9798772at2"/>
<dbReference type="GO" id="GO:0005737">
    <property type="term" value="C:cytoplasm"/>
    <property type="evidence" value="ECO:0007669"/>
    <property type="project" value="UniProtKB-SubCell"/>
</dbReference>
<dbReference type="GO" id="GO:0016151">
    <property type="term" value="F:nickel cation binding"/>
    <property type="evidence" value="ECO:0007669"/>
    <property type="project" value="UniProtKB-UniRule"/>
</dbReference>
<dbReference type="Gene3D" id="1.10.4190.10">
    <property type="entry name" value="Urease accessory protein UreF"/>
    <property type="match status" value="1"/>
</dbReference>
<dbReference type="HAMAP" id="MF_01385">
    <property type="entry name" value="UreF"/>
    <property type="match status" value="1"/>
</dbReference>
<dbReference type="InterPro" id="IPR002639">
    <property type="entry name" value="UreF"/>
</dbReference>
<dbReference type="InterPro" id="IPR038277">
    <property type="entry name" value="UreF_sf"/>
</dbReference>
<dbReference type="PANTHER" id="PTHR33620">
    <property type="entry name" value="UREASE ACCESSORY PROTEIN F"/>
    <property type="match status" value="1"/>
</dbReference>
<dbReference type="PANTHER" id="PTHR33620:SF1">
    <property type="entry name" value="UREASE ACCESSORY PROTEIN F"/>
    <property type="match status" value="1"/>
</dbReference>
<dbReference type="Pfam" id="PF01730">
    <property type="entry name" value="UreF"/>
    <property type="match status" value="1"/>
</dbReference>
<dbReference type="PIRSF" id="PIRSF009467">
    <property type="entry name" value="Ureas_acces_UreF"/>
    <property type="match status" value="1"/>
</dbReference>
<feature type="chain" id="PRO_0000344160" description="Urease accessory protein UreF">
    <location>
        <begin position="1"/>
        <end position="230"/>
    </location>
</feature>
<reference key="1">
    <citation type="journal article" date="2010" name="PLoS ONE">
        <title>The complete multipartite genome sequence of Cupriavidus necator JMP134, a versatile pollutant degrader.</title>
        <authorList>
            <person name="Lykidis A."/>
            <person name="Perez-Pantoja D."/>
            <person name="Ledger T."/>
            <person name="Mavromatis K."/>
            <person name="Anderson I.J."/>
            <person name="Ivanova N.N."/>
            <person name="Hooper S.D."/>
            <person name="Lapidus A."/>
            <person name="Lucas S."/>
            <person name="Gonzalez B."/>
            <person name="Kyrpides N.C."/>
        </authorList>
    </citation>
    <scope>NUCLEOTIDE SEQUENCE [LARGE SCALE GENOMIC DNA]</scope>
    <source>
        <strain>JMP134 / LMG 1197</strain>
    </source>
</reference>
<protein>
    <recommendedName>
        <fullName evidence="1">Urease accessory protein UreF</fullName>
    </recommendedName>
</protein>
<proteinExistence type="inferred from homology"/>
<name>UREF_CUPPJ</name>